<reference key="1">
    <citation type="journal article" date="2001" name="Virus Res.">
        <title>Bovine coronaviruses associated with enteric and respiratory diseases in Canadian dairy cattle display different reactivities to anti-HE monoclonal antibodies and distinct amino acid changes in their HE, S and ns4.9 protein.</title>
        <authorList>
            <person name="Gelinas A.-M."/>
            <person name="Boutin M."/>
            <person name="Sasseville A.M.-J."/>
            <person name="Dea S."/>
        </authorList>
    </citation>
    <scope>NUCLEOTIDE SEQUENCE [GENOMIC RNA]</scope>
    <source>
        <strain>Isolate BCO.43277</strain>
        <strain>Isolate BCO.44175</strain>
    </source>
</reference>
<reference key="2">
    <citation type="journal article" date="2001" name="Adv. Exp. Med. Biol.">
        <title>Identification of specific variations within the HE, S1, and ORF4 genes of bovine coronaviruses associated with enteric and respiratory diseases in dairy cattle.</title>
        <authorList>
            <person name="Gelinas A.-M."/>
            <person name="Sasseville A.M.-J."/>
            <person name="Dea S."/>
        </authorList>
    </citation>
    <scope>NUCLEOTIDE SEQUENCE</scope>
    <source>
        <strain>Isolate BCO.43277</strain>
        <strain>Isolate BCO.44175</strain>
    </source>
</reference>
<protein>
    <recommendedName>
        <fullName evidence="1">Hemagglutinin-esterase</fullName>
        <shortName evidence="1">HE protein</shortName>
        <ecNumber evidence="1">3.1.1.53</ecNumber>
    </recommendedName>
    <alternativeName>
        <fullName evidence="1">E3 glycoprotein</fullName>
    </alternativeName>
</protein>
<evidence type="ECO:0000255" key="1">
    <source>
        <dbReference type="HAMAP-Rule" id="MF_04207"/>
    </source>
</evidence>
<proteinExistence type="inferred from homology"/>
<gene>
    <name evidence="1" type="primary">HE</name>
    <name type="ORF">2b</name>
</gene>
<sequence length="424" mass="47652">MFLLPRFVLVSCIIGSLGFDNPPTNVVSHLNGDWFLFGDSRSDCNHVVTTNPRNYSYMDLNPALCGSGKISSKAGNSIFRSFHFTDFYNYTGEGQQIIFYEGVNFTPYHAFKCTTSGSNDIWMQNKGLFYTQVYKNMAVYRSLTFVNVPYVYNGSAQSTALCKSGSLVLNNPAYIAREANFGDYYYKVEADFYLSGCDEYIVPLCIFNGKFLSNTKYYDDSQYYFNKDTGVIYGLNSTETITTGFDFNCHYLVLPSGNYLAISNELLLTVPTKAICLNKRKDFTPVQVVDSRWNNARQSDNMTAVACQPPYCYFRNSTTNYVGVYDINHGDAGFTSILSGLLYDSPCFSQQGVFRYDNVSSVWPLYPYGRCPTAADINTPDVPICVYDPLPIIFLGILLGVAVIIIVVLLLYFMVDNGTRLHDA</sequence>
<comment type="function">
    <text evidence="1">Structural protein that makes short spikes at the surface of the virus. Contains receptor binding and receptor-destroying activities. Mediates de-O-acetylation of N-acetyl-4-O-acetylneuraminic acid, which is probably the receptor determinant recognized by the virus on the surface of erythrocytes and susceptible cells. This receptor-destroying activity is important for virus release as it probably helps preventing self-aggregation and ensures the efficient spread of the progeny virus from cell to cell. May serve as a secondary viral attachment protein for initiating infection, the spike protein being the major one. May become a target for both the humoral and the cellular branches of the immune system.</text>
</comment>
<comment type="catalytic activity">
    <reaction evidence="1">
        <text>N-acetyl-9-O-acetylneuraminate + H2O = N-acetylneuraminate + acetate + H(+)</text>
        <dbReference type="Rhea" id="RHEA:22600"/>
        <dbReference type="ChEBI" id="CHEBI:15377"/>
        <dbReference type="ChEBI" id="CHEBI:15378"/>
        <dbReference type="ChEBI" id="CHEBI:28999"/>
        <dbReference type="ChEBI" id="CHEBI:30089"/>
        <dbReference type="ChEBI" id="CHEBI:35418"/>
        <dbReference type="EC" id="3.1.1.53"/>
    </reaction>
</comment>
<comment type="catalytic activity">
    <reaction evidence="1">
        <text>N-acetyl-4-O-acetylneuraminate + H2O = N-acetylneuraminate + acetate + H(+)</text>
        <dbReference type="Rhea" id="RHEA:25564"/>
        <dbReference type="ChEBI" id="CHEBI:15377"/>
        <dbReference type="ChEBI" id="CHEBI:15378"/>
        <dbReference type="ChEBI" id="CHEBI:29006"/>
        <dbReference type="ChEBI" id="CHEBI:30089"/>
        <dbReference type="ChEBI" id="CHEBI:35418"/>
        <dbReference type="EC" id="3.1.1.53"/>
    </reaction>
</comment>
<comment type="subunit">
    <text evidence="1">Homodimer; disulfide-linked. Forms a complex with the M protein in the pre-Golgi. Associates then with S-M complex to form a ternary complex S-M-HE.</text>
</comment>
<comment type="subcellular location">
    <subcellularLocation>
        <location evidence="1">Virion membrane</location>
        <topology evidence="1">Single-pass type I membrane protein</topology>
    </subcellularLocation>
    <subcellularLocation>
        <location evidence="1">Host cell membrane</location>
        <topology evidence="1">Single-pass type I membrane protein</topology>
    </subcellularLocation>
    <text evidence="1">In infected cells becomes incorporated into the envelope of virions during virus assembly at the endoplasmic reticulum and cis Golgi. However, some may escape incorporation into virions and subsequently migrate to the cell surface.</text>
</comment>
<comment type="PTM">
    <text evidence="1">N-glycosylated in the host RER.</text>
</comment>
<comment type="similarity">
    <text evidence="1">Belongs to the influenza type C/coronaviruses hemagglutinin-esterase family.</text>
</comment>
<organism>
    <name type="scientific">Bovine coronavirus (strain Ontario)</name>
    <name type="common">BCoV</name>
    <name type="synonym">BCV</name>
    <dbReference type="NCBI Taxonomy" id="231422"/>
    <lineage>
        <taxon>Viruses</taxon>
        <taxon>Riboviria</taxon>
        <taxon>Orthornavirae</taxon>
        <taxon>Pisuviricota</taxon>
        <taxon>Pisoniviricetes</taxon>
        <taxon>Nidovirales</taxon>
        <taxon>Cornidovirineae</taxon>
        <taxon>Coronaviridae</taxon>
        <taxon>Orthocoronavirinae</taxon>
        <taxon>Betacoronavirus</taxon>
        <taxon>Embecovirus</taxon>
        <taxon>Betacoronavirus 1</taxon>
    </lineage>
</organism>
<keyword id="KW-1015">Disulfide bond</keyword>
<keyword id="KW-0325">Glycoprotein</keyword>
<keyword id="KW-0348">Hemagglutinin</keyword>
<keyword id="KW-1032">Host cell membrane</keyword>
<keyword id="KW-1043">Host membrane</keyword>
<keyword id="KW-0378">Hydrolase</keyword>
<keyword id="KW-0472">Membrane</keyword>
<keyword id="KW-0732">Signal</keyword>
<keyword id="KW-0812">Transmembrane</keyword>
<keyword id="KW-1133">Transmembrane helix</keyword>
<keyword id="KW-0261">Viral envelope protein</keyword>
<keyword id="KW-0946">Virion</keyword>
<name>HEMA_CVBON</name>
<feature type="signal peptide" evidence="1">
    <location>
        <begin position="1"/>
        <end position="16"/>
    </location>
</feature>
<feature type="chain" id="PRO_0000037141" description="Hemagglutinin-esterase" evidence="1">
    <location>
        <begin position="17"/>
        <end position="424"/>
    </location>
</feature>
<feature type="topological domain" description="Virion surface" evidence="1">
    <location>
        <begin position="17"/>
        <end position="392"/>
    </location>
</feature>
<feature type="transmembrane region" description="Helical" evidence="1">
    <location>
        <begin position="393"/>
        <end position="413"/>
    </location>
</feature>
<feature type="topological domain" description="Intravirion" evidence="1">
    <location>
        <begin position="414"/>
        <end position="424"/>
    </location>
</feature>
<feature type="region of interest" description="Esterase domain 1" evidence="1">
    <location>
        <begin position="7"/>
        <end position="127"/>
    </location>
</feature>
<feature type="region of interest" description="Receptor binding" evidence="1">
    <location>
        <begin position="128"/>
        <end position="266"/>
    </location>
</feature>
<feature type="region of interest" description="Esterase domain 2" evidence="1">
    <location>
        <begin position="267"/>
        <end position="379"/>
    </location>
</feature>
<feature type="active site" description="Nucleophile" evidence="1">
    <location>
        <position position="40"/>
    </location>
</feature>
<feature type="active site" description="Charge relay system" evidence="1">
    <location>
        <position position="326"/>
    </location>
</feature>
<feature type="active site" description="Charge relay system" evidence="1">
    <location>
        <position position="329"/>
    </location>
</feature>
<feature type="glycosylation site" description="N-linked (GlcNAc...) asparagine; by host" evidence="1">
    <location>
        <position position="54"/>
    </location>
</feature>
<feature type="glycosylation site" description="N-linked (GlcNAc...) asparagine; by host" evidence="1">
    <location>
        <position position="89"/>
    </location>
</feature>
<feature type="glycosylation site" description="N-linked (GlcNAc...) asparagine; by host" evidence="1">
    <location>
        <position position="153"/>
    </location>
</feature>
<feature type="glycosylation site" description="N-linked (GlcNAc...) asparagine; by host" evidence="1">
    <location>
        <position position="236"/>
    </location>
</feature>
<feature type="glycosylation site" description="N-linked (GlcNAc...) asparagine; by host" evidence="1">
    <location>
        <position position="301"/>
    </location>
</feature>
<feature type="glycosylation site" description="N-linked (GlcNAc...) asparagine; by host" evidence="1">
    <location>
        <position position="316"/>
    </location>
</feature>
<feature type="glycosylation site" description="N-linked (GlcNAc...) asparagine; by host" evidence="1">
    <location>
        <position position="358"/>
    </location>
</feature>
<feature type="glycosylation site" description="N-linked (GlcNAc...) asparagine; by host" evidence="1">
    <location>
        <position position="417"/>
    </location>
</feature>
<feature type="disulfide bond" evidence="1">
    <location>
        <begin position="44"/>
        <end position="65"/>
    </location>
</feature>
<feature type="disulfide bond" evidence="1">
    <location>
        <begin position="113"/>
        <end position="162"/>
    </location>
</feature>
<feature type="disulfide bond" evidence="1">
    <location>
        <begin position="197"/>
        <end position="276"/>
    </location>
</feature>
<feature type="disulfide bond" evidence="1">
    <location>
        <begin position="205"/>
        <end position="249"/>
    </location>
</feature>
<feature type="disulfide bond" evidence="1">
    <location>
        <begin position="307"/>
        <end position="312"/>
    </location>
</feature>
<feature type="disulfide bond" evidence="1">
    <location>
        <begin position="347"/>
        <end position="371"/>
    </location>
</feature>
<feature type="sequence variant" description="In strain: Isolate BCO.43277.">
    <original>F</original>
    <variation>L</variation>
    <location>
        <position position="394"/>
    </location>
</feature>
<accession>Q9DR81</accession>
<accession>Q98VL2</accession>
<organismHost>
    <name type="scientific">Bos taurus</name>
    <name type="common">Bovine</name>
    <dbReference type="NCBI Taxonomy" id="9913"/>
</organismHost>
<dbReference type="EC" id="3.1.1.53" evidence="1"/>
<dbReference type="EMBL" id="AH010241">
    <property type="protein sequence ID" value="AAG60544.1"/>
    <property type="molecule type" value="Genomic_RNA"/>
</dbReference>
<dbReference type="EMBL" id="AH010063">
    <property type="protein sequence ID" value="AAG40622.1"/>
    <property type="molecule type" value="Genomic_RNA"/>
</dbReference>
<dbReference type="SMR" id="Q9DR81"/>
<dbReference type="GlyCosmos" id="Q9DR81">
    <property type="glycosylation" value="8 sites, No reported glycans"/>
</dbReference>
<dbReference type="KEGG" id="vg:921684"/>
<dbReference type="GO" id="GO:0020002">
    <property type="term" value="C:host cell plasma membrane"/>
    <property type="evidence" value="ECO:0007669"/>
    <property type="project" value="UniProtKB-SubCell"/>
</dbReference>
<dbReference type="GO" id="GO:0016020">
    <property type="term" value="C:membrane"/>
    <property type="evidence" value="ECO:0007669"/>
    <property type="project" value="UniProtKB-UniRule"/>
</dbReference>
<dbReference type="GO" id="GO:0019031">
    <property type="term" value="C:viral envelope"/>
    <property type="evidence" value="ECO:0007669"/>
    <property type="project" value="UniProtKB-UniRule"/>
</dbReference>
<dbReference type="GO" id="GO:0055036">
    <property type="term" value="C:virion membrane"/>
    <property type="evidence" value="ECO:0007669"/>
    <property type="project" value="UniProtKB-SubCell"/>
</dbReference>
<dbReference type="GO" id="GO:0046789">
    <property type="term" value="F:host cell surface receptor binding"/>
    <property type="evidence" value="ECO:0007669"/>
    <property type="project" value="UniProtKB-UniRule"/>
</dbReference>
<dbReference type="GO" id="GO:0106331">
    <property type="term" value="F:sialate 4-O-acetylesterase activity"/>
    <property type="evidence" value="ECO:0007669"/>
    <property type="project" value="RHEA"/>
</dbReference>
<dbReference type="GO" id="GO:0106330">
    <property type="term" value="F:sialate 9-O-acetylesterase activity"/>
    <property type="evidence" value="ECO:0007669"/>
    <property type="project" value="RHEA"/>
</dbReference>
<dbReference type="GO" id="GO:0001681">
    <property type="term" value="F:sialate O-acetylesterase activity"/>
    <property type="evidence" value="ECO:0000250"/>
    <property type="project" value="UniProtKB"/>
</dbReference>
<dbReference type="GO" id="GO:0019064">
    <property type="term" value="P:fusion of virus membrane with host plasma membrane"/>
    <property type="evidence" value="ECO:0007669"/>
    <property type="project" value="UniProtKB-UniRule"/>
</dbReference>
<dbReference type="HAMAP" id="MF_04207">
    <property type="entry name" value="BETA_CORONA_HE"/>
    <property type="match status" value="1"/>
</dbReference>
<dbReference type="InterPro" id="IPR008980">
    <property type="entry name" value="Capsid_hemagglutn"/>
</dbReference>
<dbReference type="InterPro" id="IPR042545">
    <property type="entry name" value="HEMA"/>
</dbReference>
<dbReference type="InterPro" id="IPR007142">
    <property type="entry name" value="Hemagglutn-estrase_core"/>
</dbReference>
<dbReference type="InterPro" id="IPR003860">
    <property type="entry name" value="Hemagglutn-estrase_hemagglutn"/>
</dbReference>
<dbReference type="Pfam" id="PF03996">
    <property type="entry name" value="Hema_esterase"/>
    <property type="match status" value="1"/>
</dbReference>
<dbReference type="Pfam" id="PF02710">
    <property type="entry name" value="Hema_HEFG"/>
    <property type="match status" value="1"/>
</dbReference>
<dbReference type="SUPFAM" id="SSF52266">
    <property type="entry name" value="SGNH hydrolase"/>
    <property type="match status" value="1"/>
</dbReference>
<dbReference type="SUPFAM" id="SSF49818">
    <property type="entry name" value="Viral protein domain"/>
    <property type="match status" value="1"/>
</dbReference>